<gene>
    <name evidence="1" type="primary">tsaD</name>
    <name type="synonym">gcp</name>
    <name type="ordered locus">Pden_1998</name>
</gene>
<dbReference type="EC" id="2.3.1.234" evidence="1"/>
<dbReference type="EMBL" id="CP000489">
    <property type="protein sequence ID" value="ABL70090.1"/>
    <property type="molecule type" value="Genomic_DNA"/>
</dbReference>
<dbReference type="RefSeq" id="WP_011748287.1">
    <property type="nucleotide sequence ID" value="NC_008686.1"/>
</dbReference>
<dbReference type="SMR" id="A1B3J6"/>
<dbReference type="STRING" id="318586.Pden_1998"/>
<dbReference type="EnsemblBacteria" id="ABL70090">
    <property type="protein sequence ID" value="ABL70090"/>
    <property type="gene ID" value="Pden_1998"/>
</dbReference>
<dbReference type="GeneID" id="93450402"/>
<dbReference type="KEGG" id="pde:Pden_1998"/>
<dbReference type="eggNOG" id="COG0533">
    <property type="taxonomic scope" value="Bacteria"/>
</dbReference>
<dbReference type="HOGENOM" id="CLU_023208_0_2_5"/>
<dbReference type="OrthoDB" id="9806197at2"/>
<dbReference type="Proteomes" id="UP000000361">
    <property type="component" value="Chromosome 1"/>
</dbReference>
<dbReference type="GO" id="GO:0005737">
    <property type="term" value="C:cytoplasm"/>
    <property type="evidence" value="ECO:0007669"/>
    <property type="project" value="UniProtKB-SubCell"/>
</dbReference>
<dbReference type="GO" id="GO:0005506">
    <property type="term" value="F:iron ion binding"/>
    <property type="evidence" value="ECO:0007669"/>
    <property type="project" value="UniProtKB-UniRule"/>
</dbReference>
<dbReference type="GO" id="GO:0061711">
    <property type="term" value="F:N(6)-L-threonylcarbamoyladenine synthase activity"/>
    <property type="evidence" value="ECO:0007669"/>
    <property type="project" value="UniProtKB-EC"/>
</dbReference>
<dbReference type="GO" id="GO:0002949">
    <property type="term" value="P:tRNA threonylcarbamoyladenosine modification"/>
    <property type="evidence" value="ECO:0007669"/>
    <property type="project" value="UniProtKB-UniRule"/>
</dbReference>
<dbReference type="CDD" id="cd24133">
    <property type="entry name" value="ASKHA_NBD_TsaD_bac"/>
    <property type="match status" value="1"/>
</dbReference>
<dbReference type="FunFam" id="3.30.420.40:FF:000012">
    <property type="entry name" value="tRNA N6-adenosine threonylcarbamoyltransferase"/>
    <property type="match status" value="1"/>
</dbReference>
<dbReference type="FunFam" id="3.30.420.40:FF:000040">
    <property type="entry name" value="tRNA N6-adenosine threonylcarbamoyltransferase"/>
    <property type="match status" value="1"/>
</dbReference>
<dbReference type="Gene3D" id="3.30.420.40">
    <property type="match status" value="2"/>
</dbReference>
<dbReference type="HAMAP" id="MF_01445">
    <property type="entry name" value="TsaD"/>
    <property type="match status" value="1"/>
</dbReference>
<dbReference type="InterPro" id="IPR043129">
    <property type="entry name" value="ATPase_NBD"/>
</dbReference>
<dbReference type="InterPro" id="IPR000905">
    <property type="entry name" value="Gcp-like_dom"/>
</dbReference>
<dbReference type="InterPro" id="IPR017861">
    <property type="entry name" value="KAE1/TsaD"/>
</dbReference>
<dbReference type="InterPro" id="IPR022450">
    <property type="entry name" value="TsaD"/>
</dbReference>
<dbReference type="NCBIfam" id="TIGR00329">
    <property type="entry name" value="gcp_kae1"/>
    <property type="match status" value="1"/>
</dbReference>
<dbReference type="NCBIfam" id="TIGR03723">
    <property type="entry name" value="T6A_TsaD_YgjD"/>
    <property type="match status" value="1"/>
</dbReference>
<dbReference type="PANTHER" id="PTHR11735">
    <property type="entry name" value="TRNA N6-ADENOSINE THREONYLCARBAMOYLTRANSFERASE"/>
    <property type="match status" value="1"/>
</dbReference>
<dbReference type="PANTHER" id="PTHR11735:SF6">
    <property type="entry name" value="TRNA N6-ADENOSINE THREONYLCARBAMOYLTRANSFERASE, MITOCHONDRIAL"/>
    <property type="match status" value="1"/>
</dbReference>
<dbReference type="Pfam" id="PF00814">
    <property type="entry name" value="TsaD"/>
    <property type="match status" value="1"/>
</dbReference>
<dbReference type="PRINTS" id="PR00789">
    <property type="entry name" value="OSIALOPTASE"/>
</dbReference>
<dbReference type="SUPFAM" id="SSF53067">
    <property type="entry name" value="Actin-like ATPase domain"/>
    <property type="match status" value="2"/>
</dbReference>
<feature type="chain" id="PRO_0000303466" description="tRNA N6-adenosine threonylcarbamoyltransferase">
    <location>
        <begin position="1"/>
        <end position="356"/>
    </location>
</feature>
<feature type="binding site" evidence="1">
    <location>
        <position position="115"/>
    </location>
    <ligand>
        <name>Fe cation</name>
        <dbReference type="ChEBI" id="CHEBI:24875"/>
    </ligand>
</feature>
<feature type="binding site" evidence="1">
    <location>
        <position position="119"/>
    </location>
    <ligand>
        <name>Fe cation</name>
        <dbReference type="ChEBI" id="CHEBI:24875"/>
    </ligand>
</feature>
<feature type="binding site" evidence="1">
    <location>
        <begin position="137"/>
        <end position="141"/>
    </location>
    <ligand>
        <name>substrate</name>
    </ligand>
</feature>
<feature type="binding site" evidence="1">
    <location>
        <position position="170"/>
    </location>
    <ligand>
        <name>substrate</name>
    </ligand>
</feature>
<feature type="binding site" evidence="1">
    <location>
        <position position="183"/>
    </location>
    <ligand>
        <name>substrate</name>
    </ligand>
</feature>
<feature type="binding site" evidence="1">
    <location>
        <position position="280"/>
    </location>
    <ligand>
        <name>substrate</name>
    </ligand>
</feature>
<feature type="binding site" evidence="1">
    <location>
        <position position="308"/>
    </location>
    <ligand>
        <name>Fe cation</name>
        <dbReference type="ChEBI" id="CHEBI:24875"/>
    </ligand>
</feature>
<evidence type="ECO:0000255" key="1">
    <source>
        <dbReference type="HAMAP-Rule" id="MF_01445"/>
    </source>
</evidence>
<reference key="1">
    <citation type="submission" date="2006-12" db="EMBL/GenBank/DDBJ databases">
        <title>Complete sequence of chromosome 1 of Paracoccus denitrificans PD1222.</title>
        <authorList>
            <person name="Copeland A."/>
            <person name="Lucas S."/>
            <person name="Lapidus A."/>
            <person name="Barry K."/>
            <person name="Detter J.C."/>
            <person name="Glavina del Rio T."/>
            <person name="Hammon N."/>
            <person name="Israni S."/>
            <person name="Dalin E."/>
            <person name="Tice H."/>
            <person name="Pitluck S."/>
            <person name="Munk A.C."/>
            <person name="Brettin T."/>
            <person name="Bruce D."/>
            <person name="Han C."/>
            <person name="Tapia R."/>
            <person name="Gilna P."/>
            <person name="Schmutz J."/>
            <person name="Larimer F."/>
            <person name="Land M."/>
            <person name="Hauser L."/>
            <person name="Kyrpides N."/>
            <person name="Lykidis A."/>
            <person name="Spiro S."/>
            <person name="Richardson D.J."/>
            <person name="Moir J.W.B."/>
            <person name="Ferguson S.J."/>
            <person name="van Spanning R.J.M."/>
            <person name="Richardson P."/>
        </authorList>
    </citation>
    <scope>NUCLEOTIDE SEQUENCE [LARGE SCALE GENOMIC DNA]</scope>
    <source>
        <strain>Pd 1222</strain>
    </source>
</reference>
<protein>
    <recommendedName>
        <fullName evidence="1">tRNA N6-adenosine threonylcarbamoyltransferase</fullName>
        <ecNumber evidence="1">2.3.1.234</ecNumber>
    </recommendedName>
    <alternativeName>
        <fullName evidence="1">N6-L-threonylcarbamoyladenine synthase</fullName>
        <shortName evidence="1">t(6)A synthase</shortName>
    </alternativeName>
    <alternativeName>
        <fullName evidence="1">t(6)A37 threonylcarbamoyladenosine biosynthesis protein TsaD</fullName>
    </alternativeName>
    <alternativeName>
        <fullName evidence="1">tRNA threonylcarbamoyladenosine biosynthesis protein TsaD</fullName>
    </alternativeName>
</protein>
<keyword id="KW-0012">Acyltransferase</keyword>
<keyword id="KW-0963">Cytoplasm</keyword>
<keyword id="KW-0408">Iron</keyword>
<keyword id="KW-0479">Metal-binding</keyword>
<keyword id="KW-1185">Reference proteome</keyword>
<keyword id="KW-0808">Transferase</keyword>
<keyword id="KW-0819">tRNA processing</keyword>
<proteinExistence type="inferred from homology"/>
<name>TSAD_PARDP</name>
<sequence>MSMGLTFLGIESSCDDTAAAVVRDDRSILASVVAGQAALHADFGGVVPEIAARAHAEKLDLCVEEALAQAGLRLSDLDGIAVTAGPGLIGGVLSGVMLAKGLAAGTGLPLVGVNHLAGHALTPRLTDGTPYPYLMLLVSGGHCQFLRVDGPEDFTRLGGTIDDAPGEAFDKVAKLLGLPQPGGPSVEAAARAGDARRFALPRPLLDRPGCDLSFSGLKTAVLRQRDELVAAQGGLHEQDRADLCAGFQAAVAEVLAEKTRRALALAPAPVLAAAGGVAANQTLRTALQAVAAEAGATFLAPPLRLCTDNAAMIAWAGIEAYEAGRRDGMDLAARPRWPLDQRAAPMLGAGKRGAKA</sequence>
<comment type="function">
    <text evidence="1">Required for the formation of a threonylcarbamoyl group on adenosine at position 37 (t(6)A37) in tRNAs that read codons beginning with adenine. Is involved in the transfer of the threonylcarbamoyl moiety of threonylcarbamoyl-AMP (TC-AMP) to the N6 group of A37, together with TsaE and TsaB. TsaD likely plays a direct catalytic role in this reaction.</text>
</comment>
<comment type="catalytic activity">
    <reaction evidence="1">
        <text>L-threonylcarbamoyladenylate + adenosine(37) in tRNA = N(6)-L-threonylcarbamoyladenosine(37) in tRNA + AMP + H(+)</text>
        <dbReference type="Rhea" id="RHEA:37059"/>
        <dbReference type="Rhea" id="RHEA-COMP:10162"/>
        <dbReference type="Rhea" id="RHEA-COMP:10163"/>
        <dbReference type="ChEBI" id="CHEBI:15378"/>
        <dbReference type="ChEBI" id="CHEBI:73682"/>
        <dbReference type="ChEBI" id="CHEBI:74411"/>
        <dbReference type="ChEBI" id="CHEBI:74418"/>
        <dbReference type="ChEBI" id="CHEBI:456215"/>
        <dbReference type="EC" id="2.3.1.234"/>
    </reaction>
</comment>
<comment type="cofactor">
    <cofactor evidence="1">
        <name>Fe(2+)</name>
        <dbReference type="ChEBI" id="CHEBI:29033"/>
    </cofactor>
    <text evidence="1">Binds 1 Fe(2+) ion per subunit.</text>
</comment>
<comment type="subcellular location">
    <subcellularLocation>
        <location evidence="1">Cytoplasm</location>
    </subcellularLocation>
</comment>
<comment type="similarity">
    <text evidence="1">Belongs to the KAE1 / TsaD family.</text>
</comment>
<accession>A1B3J6</accession>
<organism>
    <name type="scientific">Paracoccus denitrificans (strain Pd 1222)</name>
    <dbReference type="NCBI Taxonomy" id="318586"/>
    <lineage>
        <taxon>Bacteria</taxon>
        <taxon>Pseudomonadati</taxon>
        <taxon>Pseudomonadota</taxon>
        <taxon>Alphaproteobacteria</taxon>
        <taxon>Rhodobacterales</taxon>
        <taxon>Paracoccaceae</taxon>
        <taxon>Paracoccus</taxon>
    </lineage>
</organism>